<proteinExistence type="evidence at protein level"/>
<reference key="1">
    <citation type="journal article" date="1997" name="FEMS Microbiol. Lett.">
        <title>Purification and properties of an F420H2 dehydrogenase from Methanosarcina mazei Go1.</title>
        <authorList>
            <person name="Abken H.-J."/>
            <person name="Deppenmeier U."/>
        </authorList>
    </citation>
    <scope>NUCLEOTIDE SEQUENCE [GENOMIC DNA]</scope>
    <scope>FUNCTION</scope>
    <scope>CATALYTIC ACTIVITY</scope>
    <scope>BIOPHYSICOCHEMICAL PROPERTIES</scope>
    <scope>SUBSTRATE SPECIFICITY</scope>
    <source>
        <strain>ATCC BAA-159 / DSM 3647 / Goe1 / Go1 / JCM 11833 / OCM 88</strain>
    </source>
</reference>
<reference key="2">
    <citation type="journal article" date="2000" name="J. Biol. Chem.">
        <title>The F420H2 dehydrogenase from Methanosarcina mazei is a Redox-driven proton pump closely related to NADH dehydrogenases.</title>
        <authorList>
            <person name="Baumer S."/>
            <person name="Ide T."/>
            <person name="Jacobi C."/>
            <person name="Johann A."/>
            <person name="Gottschalk G."/>
            <person name="Deppenmeier U."/>
        </authorList>
    </citation>
    <scope>NUCLEOTIDE SEQUENCE [GENOMIC DNA]</scope>
    <scope>PROTEIN SEQUENCE</scope>
    <scope>FUNCTION IN THE PROTON TRANSLOCATION</scope>
    <scope>SUBUNIT</scope>
    <scope>NOMENCLATURE</scope>
    <source>
        <strain>ATCC BAA-159 / DSM 3647 / Goe1 / Go1 / JCM 11833 / OCM 88</strain>
    </source>
</reference>
<reference key="3">
    <citation type="journal article" date="2002" name="J. Mol. Microbiol. Biotechnol.">
        <title>The genome of Methanosarcina mazei: evidence for lateral gene transfer between Bacteria and Archaea.</title>
        <authorList>
            <person name="Deppenmeier U."/>
            <person name="Johann A."/>
            <person name="Hartsch T."/>
            <person name="Merkl R."/>
            <person name="Schmitz R.A."/>
            <person name="Martinez-Arias R."/>
            <person name="Henne A."/>
            <person name="Wiezer A."/>
            <person name="Baeumer S."/>
            <person name="Jacobi C."/>
            <person name="Brueggemann H."/>
            <person name="Lienard T."/>
            <person name="Christmann A."/>
            <person name="Boemecke M."/>
            <person name="Steckel S."/>
            <person name="Bhattacharyya A."/>
            <person name="Lykidis A."/>
            <person name="Overbeek R."/>
            <person name="Klenk H.-P."/>
            <person name="Gunsalus R.P."/>
            <person name="Fritz H.-J."/>
            <person name="Gottschalk G."/>
        </authorList>
    </citation>
    <scope>NUCLEOTIDE SEQUENCE [LARGE SCALE GENOMIC DNA]</scope>
    <source>
        <strain>ATCC BAA-159 / DSM 3647 / Goe1 / Go1 / JCM 11833 / OCM 88</strain>
    </source>
</reference>
<name>FPOC_METMA</name>
<dbReference type="EC" id="1.5.98.3" evidence="3"/>
<dbReference type="EMBL" id="AF228525">
    <property type="protein sequence ID" value="AAF65733.1"/>
    <property type="molecule type" value="Genomic_DNA"/>
</dbReference>
<dbReference type="EMBL" id="AE008384">
    <property type="protein sequence ID" value="AAM32185.1"/>
    <property type="molecule type" value="Genomic_DNA"/>
</dbReference>
<dbReference type="RefSeq" id="WP_011034407.1">
    <property type="nucleotide sequence ID" value="NC_003901.1"/>
</dbReference>
<dbReference type="SMR" id="F1SVL1"/>
<dbReference type="TCDB" id="3.D.9.1.1">
    <property type="family name" value="the h(+)-translocating f420h2 dehydrogenase (f420h2dh) family"/>
</dbReference>
<dbReference type="GeneID" id="82161565"/>
<dbReference type="KEGG" id="mma:MM_2489"/>
<dbReference type="PATRIC" id="fig|192952.21.peg.2848"/>
<dbReference type="eggNOG" id="arCOG01551">
    <property type="taxonomic scope" value="Archaea"/>
</dbReference>
<dbReference type="HOGENOM" id="CLU_042628_6_1_2"/>
<dbReference type="BioCyc" id="MetaCyc:MONOMER-12225"/>
<dbReference type="BRENDA" id="1.12.98.3">
    <property type="organism ID" value="3270"/>
</dbReference>
<dbReference type="Proteomes" id="UP000000595">
    <property type="component" value="Chromosome"/>
</dbReference>
<dbReference type="GO" id="GO:0005886">
    <property type="term" value="C:plasma membrane"/>
    <property type="evidence" value="ECO:0007669"/>
    <property type="project" value="UniProtKB-SubCell"/>
</dbReference>
<dbReference type="GO" id="GO:0051911">
    <property type="term" value="F:Methanosarcina-phenazine hydrogenase activity"/>
    <property type="evidence" value="ECO:0007669"/>
    <property type="project" value="UniProtKB-EC"/>
</dbReference>
<dbReference type="GO" id="GO:0008137">
    <property type="term" value="F:NADH dehydrogenase (ubiquinone) activity"/>
    <property type="evidence" value="ECO:0007669"/>
    <property type="project" value="InterPro"/>
</dbReference>
<dbReference type="GO" id="GO:0043738">
    <property type="term" value="F:reduced coenzyme F420 dehydrogenase activity"/>
    <property type="evidence" value="ECO:0007669"/>
    <property type="project" value="RHEA"/>
</dbReference>
<dbReference type="GO" id="GO:0015948">
    <property type="term" value="P:methanogenesis"/>
    <property type="evidence" value="ECO:0007669"/>
    <property type="project" value="UniProtKB-KW"/>
</dbReference>
<dbReference type="GO" id="GO:0015945">
    <property type="term" value="P:methanol metabolic process"/>
    <property type="evidence" value="ECO:0007669"/>
    <property type="project" value="UniProtKB-KW"/>
</dbReference>
<dbReference type="Gene3D" id="3.30.460.80">
    <property type="entry name" value="NADH:ubiquinone oxidoreductase, 30kDa subunit"/>
    <property type="match status" value="1"/>
</dbReference>
<dbReference type="InterPro" id="IPR053606">
    <property type="entry name" value="Complex_I_30kDa_subunit-like"/>
</dbReference>
<dbReference type="InterPro" id="IPR010218">
    <property type="entry name" value="NADH_DH_suC"/>
</dbReference>
<dbReference type="InterPro" id="IPR037232">
    <property type="entry name" value="NADH_quin_OxRdtase_su_C/D-like"/>
</dbReference>
<dbReference type="InterPro" id="IPR001268">
    <property type="entry name" value="NADH_UbQ_OxRdtase_30kDa_su"/>
</dbReference>
<dbReference type="InterPro" id="IPR020396">
    <property type="entry name" value="NADH_UbQ_OxRdtase_CS"/>
</dbReference>
<dbReference type="NCBIfam" id="NF040611">
    <property type="entry name" value="F420_dehyd_FpoC"/>
    <property type="match status" value="1"/>
</dbReference>
<dbReference type="NCBIfam" id="TIGR01961">
    <property type="entry name" value="NuoC_fam"/>
    <property type="match status" value="1"/>
</dbReference>
<dbReference type="NCBIfam" id="NF004735">
    <property type="entry name" value="PRK06074.2-2"/>
    <property type="match status" value="1"/>
</dbReference>
<dbReference type="PANTHER" id="PTHR10884:SF14">
    <property type="entry name" value="NADH DEHYDROGENASE [UBIQUINONE] IRON-SULFUR PROTEIN 3, MITOCHONDRIAL"/>
    <property type="match status" value="1"/>
</dbReference>
<dbReference type="PANTHER" id="PTHR10884">
    <property type="entry name" value="NADH DEHYDROGENASE UBIQUINONE IRON-SULFUR PROTEIN 3"/>
    <property type="match status" value="1"/>
</dbReference>
<dbReference type="Pfam" id="PF00329">
    <property type="entry name" value="Complex1_30kDa"/>
    <property type="match status" value="1"/>
</dbReference>
<dbReference type="SUPFAM" id="SSF143243">
    <property type="entry name" value="Nqo5-like"/>
    <property type="match status" value="1"/>
</dbReference>
<dbReference type="PROSITE" id="PS00542">
    <property type="entry name" value="COMPLEX1_30K"/>
    <property type="match status" value="1"/>
</dbReference>
<keyword id="KW-1003">Cell membrane</keyword>
<keyword id="KW-0903">Direct protein sequencing</keyword>
<keyword id="KW-0249">Electron transport</keyword>
<keyword id="KW-0472">Membrane</keyword>
<keyword id="KW-0484">Methanogenesis</keyword>
<keyword id="KW-0485">Methanol utilization</keyword>
<keyword id="KW-0560">Oxidoreductase</keyword>
<keyword id="KW-0813">Transport</keyword>
<evidence type="ECO:0000250" key="1"/>
<evidence type="ECO:0000269" key="2">
    <source>
    </source>
</evidence>
<evidence type="ECO:0000269" key="3">
    <source ref="1"/>
</evidence>
<evidence type="ECO:0000305" key="4"/>
<organism>
    <name type="scientific">Methanosarcina mazei (strain ATCC BAA-159 / DSM 3647 / Goe1 / Go1 / JCM 11833 / OCM 88)</name>
    <name type="common">Methanosarcina frisia</name>
    <dbReference type="NCBI Taxonomy" id="192952"/>
    <lineage>
        <taxon>Archaea</taxon>
        <taxon>Methanobacteriati</taxon>
        <taxon>Methanobacteriota</taxon>
        <taxon>Stenosarchaea group</taxon>
        <taxon>Methanomicrobia</taxon>
        <taxon>Methanosarcinales</taxon>
        <taxon>Methanosarcinaceae</taxon>
        <taxon>Methanosarcina</taxon>
    </lineage>
</organism>
<accession>F1SVL1</accession>
<accession>Q7LWJ6</accession>
<accession>Q9P9G1</accession>
<protein>
    <recommendedName>
        <fullName>F(420)H(2) dehydrogenase subunit C</fullName>
        <ecNumber evidence="3">1.5.98.3</ecNumber>
    </recommendedName>
    <alternativeName>
        <fullName>F(420)H(2)-dependent phenazine dehydrogenase subunit C</fullName>
    </alternativeName>
    <alternativeName>
        <fullName>F(420)H(2)-dependent phenazine oxidoreductase subunit C</fullName>
        <shortName>FPO subunit C</shortName>
    </alternativeName>
    <alternativeName>
        <fullName>Methanophenazine hydrogenase subunit C</fullName>
    </alternativeName>
    <alternativeName>
        <fullName>Methanosarcina-phenazine hydrogenase subunit C</fullName>
    </alternativeName>
</protein>
<gene>
    <name type="primary">fpoC</name>
    <name type="ordered locus">MM_2489</name>
</gene>
<feature type="chain" id="PRO_0000423963" description="F(420)H(2) dehydrogenase subunit C">
    <location>
        <begin position="1"/>
        <end position="158"/>
    </location>
</feature>
<comment type="function">
    <text evidence="2 3">Component of the F(420)H(2) dehydrogenase (FPO complex) which is part of the energy-conserving F(420)H(2):heterodisulfide oxidoreductase system. The membrane-bound electron transfer system of the complex plays an important role in the metabolism of methylotrophic methanogens when the organisms grow on methanol or methylamines. Catalyzes the oxidation of methanophenazine to dihydromethanophenazine. It shuttles electrons from F(420)H(2), via FAD and iron-sulfur (Fe-S) centers, to methanophenazine (an electron carrier in the membrane). It couples the redox reaction to proton translocation (for every two electrons transferred, two hydrogen ions are translocated across the cytoplasmic membrane), and thus conserves the redox energy in a proton gradient. It also catalyzes the oxidation of F(420)H(2) with quinones such as 2,3-dimethyl-1,4-naphthoquinone, 2-methyl-1,4-naphthoquinone and tetramethyl-p-benzoquinone.</text>
</comment>
<comment type="catalytic activity">
    <reaction evidence="3">
        <text>methanophenazine + reduced coenzyme F420-(gamma-L-Glu)(n) = dihydromethanophenazine + oxidized coenzyme F420-(gamma-L-Glu)(n) + H(+)</text>
        <dbReference type="Rhea" id="RHEA:54752"/>
        <dbReference type="Rhea" id="RHEA-COMP:12939"/>
        <dbReference type="Rhea" id="RHEA-COMP:14378"/>
        <dbReference type="ChEBI" id="CHEBI:15378"/>
        <dbReference type="ChEBI" id="CHEBI:29118"/>
        <dbReference type="ChEBI" id="CHEBI:50375"/>
        <dbReference type="ChEBI" id="CHEBI:133980"/>
        <dbReference type="ChEBI" id="CHEBI:139511"/>
        <dbReference type="EC" id="1.5.98.3"/>
    </reaction>
</comment>
<comment type="biophysicochemical properties">
    <kinetics>
        <KM evidence="3">7 uM for F(420)H(2) (at 37 degrees Celsius and pH 7)</KM>
        <Vmax evidence="3">17.0 umol/min/mg enzyme (at 37 degrees Celsius and pH 7)</Vmax>
        <text>Measured for the whole complex.</text>
    </kinetics>
    <phDependence>
        <text evidence="3">Optimum pH is 8.5.</text>
    </phDependence>
    <temperatureDependence>
        <text evidence="3">Optimum temperature is 39 degrees Celsius.</text>
    </temperatureDependence>
</comment>
<comment type="subunit">
    <text evidence="2">The FPO complex is composed of at least 13 different subunits.</text>
</comment>
<comment type="subcellular location">
    <subcellularLocation>
        <location evidence="1">Cell membrane</location>
        <topology evidence="1">Peripheral membrane protein</topology>
        <orientation evidence="1">Cytoplasmic side</orientation>
    </subcellularLocation>
</comment>
<comment type="similarity">
    <text evidence="4">Belongs to the complex I 30 kDa subunit family.</text>
</comment>
<sequence length="158" mass="18326">MDARTIIESLTGKFPEAISEAGIESPIRIRAYVDKDKAKEVCEYLKGSLQFDHLCSVSGVDYPQRDELEAVYHIASYDHPVVLMLKARLPRDSPEIESVVSVYWNANWYERETYELYGIFFKNHPELKPLVLPDDMLGEWPLRKDYEGFPNRTARNLV</sequence>